<dbReference type="EMBL" id="AP009351">
    <property type="protein sequence ID" value="BAF66772.1"/>
    <property type="molecule type" value="Genomic_DNA"/>
</dbReference>
<dbReference type="RefSeq" id="WP_001074619.1">
    <property type="nucleotide sequence ID" value="NZ_JBBIAE010000002.1"/>
</dbReference>
<dbReference type="SMR" id="A6QEJ0"/>
<dbReference type="GeneID" id="98344872"/>
<dbReference type="KEGG" id="sae:NWMN_0500"/>
<dbReference type="HOGENOM" id="CLU_062853_0_0_9"/>
<dbReference type="Proteomes" id="UP000006386">
    <property type="component" value="Chromosome"/>
</dbReference>
<dbReference type="GO" id="GO:0015934">
    <property type="term" value="C:large ribosomal subunit"/>
    <property type="evidence" value="ECO:0007669"/>
    <property type="project" value="InterPro"/>
</dbReference>
<dbReference type="GO" id="GO:0019843">
    <property type="term" value="F:rRNA binding"/>
    <property type="evidence" value="ECO:0007669"/>
    <property type="project" value="UniProtKB-UniRule"/>
</dbReference>
<dbReference type="GO" id="GO:0003735">
    <property type="term" value="F:structural constituent of ribosome"/>
    <property type="evidence" value="ECO:0007669"/>
    <property type="project" value="InterPro"/>
</dbReference>
<dbReference type="GO" id="GO:0000049">
    <property type="term" value="F:tRNA binding"/>
    <property type="evidence" value="ECO:0007669"/>
    <property type="project" value="UniProtKB-KW"/>
</dbReference>
<dbReference type="GO" id="GO:0006417">
    <property type="term" value="P:regulation of translation"/>
    <property type="evidence" value="ECO:0007669"/>
    <property type="project" value="UniProtKB-KW"/>
</dbReference>
<dbReference type="GO" id="GO:0006412">
    <property type="term" value="P:translation"/>
    <property type="evidence" value="ECO:0007669"/>
    <property type="project" value="UniProtKB-UniRule"/>
</dbReference>
<dbReference type="CDD" id="cd00403">
    <property type="entry name" value="Ribosomal_L1"/>
    <property type="match status" value="1"/>
</dbReference>
<dbReference type="FunFam" id="3.40.50.790:FF:000001">
    <property type="entry name" value="50S ribosomal protein L1"/>
    <property type="match status" value="1"/>
</dbReference>
<dbReference type="Gene3D" id="3.30.190.20">
    <property type="match status" value="1"/>
</dbReference>
<dbReference type="Gene3D" id="3.40.50.790">
    <property type="match status" value="1"/>
</dbReference>
<dbReference type="HAMAP" id="MF_01318_B">
    <property type="entry name" value="Ribosomal_uL1_B"/>
    <property type="match status" value="1"/>
</dbReference>
<dbReference type="InterPro" id="IPR005878">
    <property type="entry name" value="Ribosom_uL1_bac-type"/>
</dbReference>
<dbReference type="InterPro" id="IPR002143">
    <property type="entry name" value="Ribosomal_uL1"/>
</dbReference>
<dbReference type="InterPro" id="IPR023674">
    <property type="entry name" value="Ribosomal_uL1-like"/>
</dbReference>
<dbReference type="InterPro" id="IPR028364">
    <property type="entry name" value="Ribosomal_uL1/biogenesis"/>
</dbReference>
<dbReference type="InterPro" id="IPR016095">
    <property type="entry name" value="Ribosomal_uL1_3-a/b-sand"/>
</dbReference>
<dbReference type="InterPro" id="IPR023673">
    <property type="entry name" value="Ribosomal_uL1_CS"/>
</dbReference>
<dbReference type="NCBIfam" id="TIGR01169">
    <property type="entry name" value="rplA_bact"/>
    <property type="match status" value="1"/>
</dbReference>
<dbReference type="PANTHER" id="PTHR36427">
    <property type="entry name" value="54S RIBOSOMAL PROTEIN L1, MITOCHONDRIAL"/>
    <property type="match status" value="1"/>
</dbReference>
<dbReference type="PANTHER" id="PTHR36427:SF3">
    <property type="entry name" value="LARGE RIBOSOMAL SUBUNIT PROTEIN UL1M"/>
    <property type="match status" value="1"/>
</dbReference>
<dbReference type="Pfam" id="PF00687">
    <property type="entry name" value="Ribosomal_L1"/>
    <property type="match status" value="1"/>
</dbReference>
<dbReference type="PIRSF" id="PIRSF002155">
    <property type="entry name" value="Ribosomal_L1"/>
    <property type="match status" value="1"/>
</dbReference>
<dbReference type="SUPFAM" id="SSF56808">
    <property type="entry name" value="Ribosomal protein L1"/>
    <property type="match status" value="1"/>
</dbReference>
<dbReference type="PROSITE" id="PS01199">
    <property type="entry name" value="RIBOSOMAL_L1"/>
    <property type="match status" value="1"/>
</dbReference>
<gene>
    <name evidence="1" type="primary">rplA</name>
    <name type="ordered locus">NWMN_0500</name>
</gene>
<keyword id="KW-0678">Repressor</keyword>
<keyword id="KW-0687">Ribonucleoprotein</keyword>
<keyword id="KW-0689">Ribosomal protein</keyword>
<keyword id="KW-0694">RNA-binding</keyword>
<keyword id="KW-0699">rRNA-binding</keyword>
<keyword id="KW-0810">Translation regulation</keyword>
<keyword id="KW-0820">tRNA-binding</keyword>
<sequence length="230" mass="24708">MAKKGKKYQEAASKVDRTQHYSVEEAIKLAKETSIANFDASVEVAFRLGIDTRKNDQQIRGAVVLPNGTGKSQSVLVFAKGDKIAEAEAAGADYVGEAEYVQKIQQGWFDFDVVVATPDMMGEVGKLGRVLGPKGLMPNPKTGTVTMDVKKAVEEIKAGKVEYRAEKAGIVHASIGKVSFTDEQLIENFNTLQDVLAKAKPSSAKGTYFKSVAVTTTMGPGVKIDTASFK</sequence>
<name>RL1_STAAE</name>
<comment type="function">
    <text evidence="1">Binds directly to 23S rRNA. The L1 stalk is quite mobile in the ribosome, and is involved in E site tRNA release.</text>
</comment>
<comment type="function">
    <text evidence="1">Protein L1 is also a translational repressor protein, it controls the translation of the L11 operon by binding to its mRNA.</text>
</comment>
<comment type="subunit">
    <text evidence="1">Part of the 50S ribosomal subunit.</text>
</comment>
<comment type="similarity">
    <text evidence="1">Belongs to the universal ribosomal protein uL1 family.</text>
</comment>
<proteinExistence type="inferred from homology"/>
<feature type="chain" id="PRO_1000073223" description="Large ribosomal subunit protein uL1">
    <location>
        <begin position="1"/>
        <end position="230"/>
    </location>
</feature>
<accession>A6QEJ0</accession>
<evidence type="ECO:0000255" key="1">
    <source>
        <dbReference type="HAMAP-Rule" id="MF_01318"/>
    </source>
</evidence>
<evidence type="ECO:0000305" key="2"/>
<reference key="1">
    <citation type="journal article" date="2008" name="J. Bacteriol.">
        <title>Genome sequence of Staphylococcus aureus strain Newman and comparative analysis of staphylococcal genomes: polymorphism and evolution of two major pathogenicity islands.</title>
        <authorList>
            <person name="Baba T."/>
            <person name="Bae T."/>
            <person name="Schneewind O."/>
            <person name="Takeuchi F."/>
            <person name="Hiramatsu K."/>
        </authorList>
    </citation>
    <scope>NUCLEOTIDE SEQUENCE [LARGE SCALE GENOMIC DNA]</scope>
    <source>
        <strain>Newman</strain>
    </source>
</reference>
<protein>
    <recommendedName>
        <fullName evidence="1">Large ribosomal subunit protein uL1</fullName>
    </recommendedName>
    <alternativeName>
        <fullName evidence="2">50S ribosomal protein L1</fullName>
    </alternativeName>
</protein>
<organism>
    <name type="scientific">Staphylococcus aureus (strain Newman)</name>
    <dbReference type="NCBI Taxonomy" id="426430"/>
    <lineage>
        <taxon>Bacteria</taxon>
        <taxon>Bacillati</taxon>
        <taxon>Bacillota</taxon>
        <taxon>Bacilli</taxon>
        <taxon>Bacillales</taxon>
        <taxon>Staphylococcaceae</taxon>
        <taxon>Staphylococcus</taxon>
    </lineage>
</organism>